<gene>
    <name evidence="1" type="primary">cmk</name>
    <name type="ordered locus">RPD_0191</name>
</gene>
<reference key="1">
    <citation type="submission" date="2006-03" db="EMBL/GenBank/DDBJ databases">
        <title>Complete sequence of Rhodopseudomonas palustris BisB5.</title>
        <authorList>
            <consortium name="US DOE Joint Genome Institute"/>
            <person name="Copeland A."/>
            <person name="Lucas S."/>
            <person name="Lapidus A."/>
            <person name="Barry K."/>
            <person name="Detter J.C."/>
            <person name="Glavina del Rio T."/>
            <person name="Hammon N."/>
            <person name="Israni S."/>
            <person name="Dalin E."/>
            <person name="Tice H."/>
            <person name="Pitluck S."/>
            <person name="Chain P."/>
            <person name="Malfatti S."/>
            <person name="Shin M."/>
            <person name="Vergez L."/>
            <person name="Schmutz J."/>
            <person name="Larimer F."/>
            <person name="Land M."/>
            <person name="Hauser L."/>
            <person name="Pelletier D.A."/>
            <person name="Kyrpides N."/>
            <person name="Lykidis A."/>
            <person name="Oda Y."/>
            <person name="Harwood C.S."/>
            <person name="Richardson P."/>
        </authorList>
    </citation>
    <scope>NUCLEOTIDE SEQUENCE [LARGE SCALE GENOMIC DNA]</scope>
    <source>
        <strain>BisB5</strain>
    </source>
</reference>
<feature type="chain" id="PRO_1000048262" description="Cytidylate kinase">
    <location>
        <begin position="1"/>
        <end position="212"/>
    </location>
</feature>
<feature type="binding site" evidence="1">
    <location>
        <begin position="7"/>
        <end position="15"/>
    </location>
    <ligand>
        <name>ATP</name>
        <dbReference type="ChEBI" id="CHEBI:30616"/>
    </ligand>
</feature>
<proteinExistence type="inferred from homology"/>
<comment type="catalytic activity">
    <reaction evidence="1">
        <text>CMP + ATP = CDP + ADP</text>
        <dbReference type="Rhea" id="RHEA:11600"/>
        <dbReference type="ChEBI" id="CHEBI:30616"/>
        <dbReference type="ChEBI" id="CHEBI:58069"/>
        <dbReference type="ChEBI" id="CHEBI:60377"/>
        <dbReference type="ChEBI" id="CHEBI:456216"/>
        <dbReference type="EC" id="2.7.4.25"/>
    </reaction>
</comment>
<comment type="catalytic activity">
    <reaction evidence="1">
        <text>dCMP + ATP = dCDP + ADP</text>
        <dbReference type="Rhea" id="RHEA:25094"/>
        <dbReference type="ChEBI" id="CHEBI:30616"/>
        <dbReference type="ChEBI" id="CHEBI:57566"/>
        <dbReference type="ChEBI" id="CHEBI:58593"/>
        <dbReference type="ChEBI" id="CHEBI:456216"/>
        <dbReference type="EC" id="2.7.4.25"/>
    </reaction>
</comment>
<comment type="subcellular location">
    <subcellularLocation>
        <location evidence="1">Cytoplasm</location>
    </subcellularLocation>
</comment>
<comment type="similarity">
    <text evidence="1">Belongs to the cytidylate kinase family. Type 1 subfamily.</text>
</comment>
<protein>
    <recommendedName>
        <fullName evidence="1">Cytidylate kinase</fullName>
        <shortName evidence="1">CK</shortName>
        <ecNumber evidence="1">2.7.4.25</ecNumber>
    </recommendedName>
    <alternativeName>
        <fullName evidence="1">Cytidine monophosphate kinase</fullName>
        <shortName evidence="1">CMP kinase</shortName>
    </alternativeName>
</protein>
<accession>Q13EQ8</accession>
<organism>
    <name type="scientific">Rhodopseudomonas palustris (strain BisB5)</name>
    <dbReference type="NCBI Taxonomy" id="316057"/>
    <lineage>
        <taxon>Bacteria</taxon>
        <taxon>Pseudomonadati</taxon>
        <taxon>Pseudomonadota</taxon>
        <taxon>Alphaproteobacteria</taxon>
        <taxon>Hyphomicrobiales</taxon>
        <taxon>Nitrobacteraceae</taxon>
        <taxon>Rhodopseudomonas</taxon>
    </lineage>
</organism>
<sequence length="212" mass="22338">MIIAIDGPAASGKGTLGKRLAAHYGFRHLDTGVIYRAVAKALLDGGADLTDEARAVAAARKLDPGIFGDPALKSQTVGDAASVISAYAPLREALVSFQRQFAADPPGAVLDGRDIGTVICPDADVKIFVIADPVVRARRRTLEALARGEAADEARVLADILKRDERDRNRSAAPLTQAPDAVLLDNSNLDIEGGVRAAIDIVEAVRAGRRRV</sequence>
<keyword id="KW-0067">ATP-binding</keyword>
<keyword id="KW-0963">Cytoplasm</keyword>
<keyword id="KW-0418">Kinase</keyword>
<keyword id="KW-0547">Nucleotide-binding</keyword>
<keyword id="KW-0808">Transferase</keyword>
<dbReference type="EC" id="2.7.4.25" evidence="1"/>
<dbReference type="EMBL" id="CP000283">
    <property type="protein sequence ID" value="ABE37431.1"/>
    <property type="molecule type" value="Genomic_DNA"/>
</dbReference>
<dbReference type="SMR" id="Q13EQ8"/>
<dbReference type="STRING" id="316057.RPD_0191"/>
<dbReference type="KEGG" id="rpd:RPD_0191"/>
<dbReference type="eggNOG" id="COG0283">
    <property type="taxonomic scope" value="Bacteria"/>
</dbReference>
<dbReference type="HOGENOM" id="CLU_079959_0_1_5"/>
<dbReference type="BioCyc" id="RPAL316057:RPD_RS00970-MONOMER"/>
<dbReference type="Proteomes" id="UP000001818">
    <property type="component" value="Chromosome"/>
</dbReference>
<dbReference type="GO" id="GO:0005737">
    <property type="term" value="C:cytoplasm"/>
    <property type="evidence" value="ECO:0007669"/>
    <property type="project" value="UniProtKB-SubCell"/>
</dbReference>
<dbReference type="GO" id="GO:0005524">
    <property type="term" value="F:ATP binding"/>
    <property type="evidence" value="ECO:0007669"/>
    <property type="project" value="UniProtKB-UniRule"/>
</dbReference>
<dbReference type="GO" id="GO:0036430">
    <property type="term" value="F:CMP kinase activity"/>
    <property type="evidence" value="ECO:0007669"/>
    <property type="project" value="RHEA"/>
</dbReference>
<dbReference type="GO" id="GO:0036431">
    <property type="term" value="F:dCMP kinase activity"/>
    <property type="evidence" value="ECO:0007669"/>
    <property type="project" value="RHEA"/>
</dbReference>
<dbReference type="GO" id="GO:0006220">
    <property type="term" value="P:pyrimidine nucleotide metabolic process"/>
    <property type="evidence" value="ECO:0007669"/>
    <property type="project" value="UniProtKB-UniRule"/>
</dbReference>
<dbReference type="CDD" id="cd02020">
    <property type="entry name" value="CMPK"/>
    <property type="match status" value="1"/>
</dbReference>
<dbReference type="Gene3D" id="3.40.50.300">
    <property type="entry name" value="P-loop containing nucleotide triphosphate hydrolases"/>
    <property type="match status" value="1"/>
</dbReference>
<dbReference type="HAMAP" id="MF_00238">
    <property type="entry name" value="Cytidyl_kinase_type1"/>
    <property type="match status" value="1"/>
</dbReference>
<dbReference type="InterPro" id="IPR003136">
    <property type="entry name" value="Cytidylate_kin"/>
</dbReference>
<dbReference type="InterPro" id="IPR011994">
    <property type="entry name" value="Cytidylate_kinase_dom"/>
</dbReference>
<dbReference type="InterPro" id="IPR027417">
    <property type="entry name" value="P-loop_NTPase"/>
</dbReference>
<dbReference type="NCBIfam" id="TIGR00017">
    <property type="entry name" value="cmk"/>
    <property type="match status" value="1"/>
</dbReference>
<dbReference type="Pfam" id="PF02224">
    <property type="entry name" value="Cytidylate_kin"/>
    <property type="match status" value="1"/>
</dbReference>
<dbReference type="SUPFAM" id="SSF52540">
    <property type="entry name" value="P-loop containing nucleoside triphosphate hydrolases"/>
    <property type="match status" value="1"/>
</dbReference>
<evidence type="ECO:0000255" key="1">
    <source>
        <dbReference type="HAMAP-Rule" id="MF_00238"/>
    </source>
</evidence>
<name>KCY_RHOPS</name>